<dbReference type="EC" id="4.2.1.41"/>
<dbReference type="EMBL" id="BA000030">
    <property type="protein sequence ID" value="BAC73292.1"/>
    <property type="molecule type" value="Genomic_DNA"/>
</dbReference>
<dbReference type="SMR" id="Q82BX4"/>
<dbReference type="KEGG" id="sma:SAVERM_5580"/>
<dbReference type="eggNOG" id="COG0329">
    <property type="taxonomic scope" value="Bacteria"/>
</dbReference>
<dbReference type="HOGENOM" id="CLU_049343_5_2_11"/>
<dbReference type="OrthoDB" id="8995637at2"/>
<dbReference type="UniPathway" id="UPA00564">
    <property type="reaction ID" value="UER00628"/>
</dbReference>
<dbReference type="Proteomes" id="UP000000428">
    <property type="component" value="Chromosome"/>
</dbReference>
<dbReference type="GO" id="GO:0008840">
    <property type="term" value="F:4-hydroxy-tetrahydrodipicolinate synthase activity"/>
    <property type="evidence" value="ECO:0007669"/>
    <property type="project" value="TreeGrafter"/>
</dbReference>
<dbReference type="GO" id="GO:0047448">
    <property type="term" value="F:5-dehydro-4-deoxyglucarate dehydratase activity"/>
    <property type="evidence" value="ECO:0007669"/>
    <property type="project" value="UniProtKB-UniRule"/>
</dbReference>
<dbReference type="GO" id="GO:0042838">
    <property type="term" value="P:D-glucarate catabolic process"/>
    <property type="evidence" value="ECO:0007669"/>
    <property type="project" value="UniProtKB-UniRule"/>
</dbReference>
<dbReference type="Gene3D" id="3.20.20.70">
    <property type="entry name" value="Aldolase class I"/>
    <property type="match status" value="1"/>
</dbReference>
<dbReference type="HAMAP" id="MF_00694">
    <property type="entry name" value="KDGDH"/>
    <property type="match status" value="1"/>
</dbReference>
<dbReference type="InterPro" id="IPR013785">
    <property type="entry name" value="Aldolase_TIM"/>
</dbReference>
<dbReference type="InterPro" id="IPR002220">
    <property type="entry name" value="DapA-like"/>
</dbReference>
<dbReference type="InterPro" id="IPR017655">
    <property type="entry name" value="Dehydro-deoxyglucarate_dehyd"/>
</dbReference>
<dbReference type="NCBIfam" id="NF002958">
    <property type="entry name" value="PRK03620.1"/>
    <property type="match status" value="1"/>
</dbReference>
<dbReference type="PANTHER" id="PTHR12128:SF19">
    <property type="entry name" value="5-DEHYDRO-4-DEOXYGLUCARATE DEHYDRATASE 2-RELATED"/>
    <property type="match status" value="1"/>
</dbReference>
<dbReference type="PANTHER" id="PTHR12128">
    <property type="entry name" value="DIHYDRODIPICOLINATE SYNTHASE"/>
    <property type="match status" value="1"/>
</dbReference>
<dbReference type="Pfam" id="PF00701">
    <property type="entry name" value="DHDPS"/>
    <property type="match status" value="1"/>
</dbReference>
<dbReference type="PIRSF" id="PIRSF001365">
    <property type="entry name" value="DHDPS"/>
    <property type="match status" value="1"/>
</dbReference>
<dbReference type="SMART" id="SM01130">
    <property type="entry name" value="DHDPS"/>
    <property type="match status" value="1"/>
</dbReference>
<dbReference type="SUPFAM" id="SSF51569">
    <property type="entry name" value="Aldolase"/>
    <property type="match status" value="1"/>
</dbReference>
<reference key="1">
    <citation type="journal article" date="2001" name="Proc. Natl. Acad. Sci. U.S.A.">
        <title>Genome sequence of an industrial microorganism Streptomyces avermitilis: deducing the ability of producing secondary metabolites.</title>
        <authorList>
            <person name="Omura S."/>
            <person name="Ikeda H."/>
            <person name="Ishikawa J."/>
            <person name="Hanamoto A."/>
            <person name="Takahashi C."/>
            <person name="Shinose M."/>
            <person name="Takahashi Y."/>
            <person name="Horikawa H."/>
            <person name="Nakazawa H."/>
            <person name="Osonoe T."/>
            <person name="Kikuchi H."/>
            <person name="Shiba T."/>
            <person name="Sakaki Y."/>
            <person name="Hattori M."/>
        </authorList>
    </citation>
    <scope>NUCLEOTIDE SEQUENCE [LARGE SCALE GENOMIC DNA]</scope>
    <source>
        <strain>ATCC 31267 / DSM 46492 / JCM 5070 / NBRC 14893 / NCIMB 12804 / NRRL 8165 / MA-4680</strain>
    </source>
</reference>
<reference key="2">
    <citation type="journal article" date="2003" name="Nat. Biotechnol.">
        <title>Complete genome sequence and comparative analysis of the industrial microorganism Streptomyces avermitilis.</title>
        <authorList>
            <person name="Ikeda H."/>
            <person name="Ishikawa J."/>
            <person name="Hanamoto A."/>
            <person name="Shinose M."/>
            <person name="Kikuchi H."/>
            <person name="Shiba T."/>
            <person name="Sakaki Y."/>
            <person name="Hattori M."/>
            <person name="Omura S."/>
        </authorList>
    </citation>
    <scope>NUCLEOTIDE SEQUENCE [LARGE SCALE GENOMIC DNA]</scope>
    <source>
        <strain>ATCC 31267 / DSM 46492 / JCM 5070 / NBRC 14893 / NCIMB 12804 / NRRL 8165 / MA-4680</strain>
    </source>
</reference>
<accession>Q82BX4</accession>
<proteinExistence type="inferred from homology"/>
<evidence type="ECO:0000256" key="1">
    <source>
        <dbReference type="SAM" id="MobiDB-lite"/>
    </source>
</evidence>
<evidence type="ECO:0000305" key="2"/>
<protein>
    <recommendedName>
        <fullName>Probable 5-dehydro-4-deoxyglucarate dehydratase 2</fullName>
        <ecNumber>4.2.1.41</ecNumber>
    </recommendedName>
    <alternativeName>
        <fullName>5-keto-4-deoxy-glucarate dehydratase 2</fullName>
        <shortName>KDGDH 2</shortName>
    </alternativeName>
</protein>
<keyword id="KW-0456">Lyase</keyword>
<keyword id="KW-1185">Reference proteome</keyword>
<feature type="chain" id="PRO_0000103240" description="Probable 5-dehydro-4-deoxyglucarate dehydratase 2">
    <location>
        <begin position="1"/>
        <end position="331"/>
    </location>
</feature>
<feature type="region of interest" description="Disordered" evidence="1">
    <location>
        <begin position="1"/>
        <end position="23"/>
    </location>
</feature>
<feature type="compositionally biased region" description="Low complexity" evidence="1">
    <location>
        <begin position="10"/>
        <end position="23"/>
    </location>
</feature>
<gene>
    <name type="ordered locus">SAV_5580</name>
</gene>
<sequence length="331" mass="34707">MSADTDTDTDTGTGTGPDTDTGTAAVVERLRGGMARGVLSFPLTSFHDDGSLDLDGFRAHLETQLAAGPGAVFPACGTGEFFSLDEDEYRQVVTAAVELTAGRVPVVAGTGYGWAQAARFARIAEDAGADALLVLPHYLVAAPQDGLVGQLERLAERTRLPLIAYQRGQVTYSVESLRRIARIPGVVGLKDGHSDLDRLQRLTLAAPEGFLFFNGAATAEIQARAYAAVGVPAYSSAVHAFAPEIAGAFHAALRDGHGKAVEKLLREFYVPFVELRDRVPGYGVSLVKAAARLRGRPVGPVRAPLTDPSAADLADLTSLLSTGLDLVGAAL</sequence>
<organism>
    <name type="scientific">Streptomyces avermitilis (strain ATCC 31267 / DSM 46492 / JCM 5070 / NBRC 14893 / NCIMB 12804 / NRRL 8165 / MA-4680)</name>
    <dbReference type="NCBI Taxonomy" id="227882"/>
    <lineage>
        <taxon>Bacteria</taxon>
        <taxon>Bacillati</taxon>
        <taxon>Actinomycetota</taxon>
        <taxon>Actinomycetes</taxon>
        <taxon>Kitasatosporales</taxon>
        <taxon>Streptomycetaceae</taxon>
        <taxon>Streptomyces</taxon>
    </lineage>
</organism>
<comment type="catalytic activity">
    <reaction>
        <text>5-dehydro-4-deoxy-D-glucarate + H(+) = 2,5-dioxopentanoate + CO2 + H2O</text>
        <dbReference type="Rhea" id="RHEA:24608"/>
        <dbReference type="ChEBI" id="CHEBI:15377"/>
        <dbReference type="ChEBI" id="CHEBI:15378"/>
        <dbReference type="ChEBI" id="CHEBI:16526"/>
        <dbReference type="ChEBI" id="CHEBI:42819"/>
        <dbReference type="ChEBI" id="CHEBI:58136"/>
        <dbReference type="EC" id="4.2.1.41"/>
    </reaction>
</comment>
<comment type="pathway">
    <text>Carbohydrate acid metabolism; D-glucarate degradation; 2,5-dioxopentanoate from D-glucarate: step 2/2.</text>
</comment>
<comment type="similarity">
    <text evidence="2">Belongs to the DapA family.</text>
</comment>
<name>KDGD2_STRAW</name>